<name>TRPD_BACCA</name>
<protein>
    <recommendedName>
        <fullName>Anthranilate phosphoribosyltransferase</fullName>
        <ecNumber>2.4.2.18</ecNumber>
    </recommendedName>
</protein>
<keyword id="KW-0028">Amino-acid biosynthesis</keyword>
<keyword id="KW-0057">Aromatic amino acid biosynthesis</keyword>
<keyword id="KW-0328">Glycosyltransferase</keyword>
<keyword id="KW-0460">Magnesium</keyword>
<keyword id="KW-0479">Metal-binding</keyword>
<keyword id="KW-0808">Transferase</keyword>
<keyword id="KW-0822">Tryptophan biosynthesis</keyword>
<sequence>MLKQLLSKCAEGKALTEDEAYAAMNIIMSGEATDSQIASLLSMLRLRGETVDELVGFVRAMRDRMTAIEASDDVIDTCGTGGDGAATFNVSTAAAIVISSLGVKVAKHGNRAVSSKSGSADVLERLGIDIHTSPSAAKQALETKGLAFLFAPLYHAAMKHAAGPRKEIGFRTVFNLIGPLANPARCKRQVVGVYSTCYAEKLAEAMRRLGSEHVLFVTGRDGLDECSIAAETDVVELKDGAI</sequence>
<evidence type="ECO:0000250" key="1"/>
<evidence type="ECO:0000305" key="2"/>
<comment type="function">
    <text evidence="1">Catalyzes the transfer of the phosphoribosyl group of 5-phosphorylribose-1-pyrophosphate (PRPP) to anthranilate to yield N-(5'-phosphoribosyl)-anthranilate (PRA).</text>
</comment>
<comment type="catalytic activity">
    <reaction>
        <text>N-(5-phospho-beta-D-ribosyl)anthranilate + diphosphate = 5-phospho-alpha-D-ribose 1-diphosphate + anthranilate</text>
        <dbReference type="Rhea" id="RHEA:11768"/>
        <dbReference type="ChEBI" id="CHEBI:16567"/>
        <dbReference type="ChEBI" id="CHEBI:18277"/>
        <dbReference type="ChEBI" id="CHEBI:33019"/>
        <dbReference type="ChEBI" id="CHEBI:58017"/>
        <dbReference type="EC" id="2.4.2.18"/>
    </reaction>
</comment>
<comment type="cofactor">
    <cofactor evidence="1">
        <name>Mg(2+)</name>
        <dbReference type="ChEBI" id="CHEBI:18420"/>
    </cofactor>
    <text evidence="1">Binds 2 magnesium ions per monomer.</text>
</comment>
<comment type="pathway">
    <text>Amino-acid biosynthesis; L-tryptophan biosynthesis; L-tryptophan from chorismate: step 2/5.</text>
</comment>
<comment type="subunit">
    <text evidence="1">Homodimer.</text>
</comment>
<comment type="similarity">
    <text evidence="2">Belongs to the anthranilate phosphoribosyltransferase family.</text>
</comment>
<gene>
    <name type="primary">trpD</name>
</gene>
<feature type="chain" id="PRO_0000154424" description="Anthranilate phosphoribosyltransferase">
    <location>
        <begin position="1"/>
        <end position="242" status="greater than"/>
    </location>
</feature>
<feature type="binding site" evidence="1">
    <location>
        <position position="79"/>
    </location>
    <ligand>
        <name>5-phospho-alpha-D-ribose 1-diphosphate</name>
        <dbReference type="ChEBI" id="CHEBI:58017"/>
    </ligand>
</feature>
<feature type="binding site" evidence="1">
    <location>
        <position position="79"/>
    </location>
    <ligand>
        <name>anthranilate</name>
        <dbReference type="ChEBI" id="CHEBI:16567"/>
        <label>1</label>
    </ligand>
</feature>
<feature type="binding site" evidence="1">
    <location>
        <begin position="82"/>
        <end position="83"/>
    </location>
    <ligand>
        <name>5-phospho-alpha-D-ribose 1-diphosphate</name>
        <dbReference type="ChEBI" id="CHEBI:58017"/>
    </ligand>
</feature>
<feature type="binding site" evidence="1">
    <location>
        <position position="87"/>
    </location>
    <ligand>
        <name>5-phospho-alpha-D-ribose 1-diphosphate</name>
        <dbReference type="ChEBI" id="CHEBI:58017"/>
    </ligand>
</feature>
<feature type="binding site" evidence="1">
    <location>
        <begin position="89"/>
        <end position="92"/>
    </location>
    <ligand>
        <name>5-phospho-alpha-D-ribose 1-diphosphate</name>
        <dbReference type="ChEBI" id="CHEBI:58017"/>
    </ligand>
</feature>
<feature type="binding site" evidence="1">
    <location>
        <position position="91"/>
    </location>
    <ligand>
        <name>Mg(2+)</name>
        <dbReference type="ChEBI" id="CHEBI:18420"/>
        <label>1</label>
    </ligand>
</feature>
<feature type="binding site" evidence="1">
    <location>
        <begin position="107"/>
        <end position="115"/>
    </location>
    <ligand>
        <name>5-phospho-alpha-D-ribose 1-diphosphate</name>
        <dbReference type="ChEBI" id="CHEBI:58017"/>
    </ligand>
</feature>
<feature type="binding site" evidence="1">
    <location>
        <position position="110"/>
    </location>
    <ligand>
        <name>anthranilate</name>
        <dbReference type="ChEBI" id="CHEBI:16567"/>
        <label>1</label>
    </ligand>
</feature>
<feature type="binding site" evidence="1">
    <location>
        <position position="119"/>
    </location>
    <ligand>
        <name>5-phospho-alpha-D-ribose 1-diphosphate</name>
        <dbReference type="ChEBI" id="CHEBI:58017"/>
    </ligand>
</feature>
<feature type="binding site" evidence="1">
    <location>
        <position position="165"/>
    </location>
    <ligand>
        <name>anthranilate</name>
        <dbReference type="ChEBI" id="CHEBI:16567"/>
        <label>2</label>
    </ligand>
</feature>
<feature type="binding site" evidence="1">
    <location>
        <position position="224"/>
    </location>
    <ligand>
        <name>Mg(2+)</name>
        <dbReference type="ChEBI" id="CHEBI:18420"/>
        <label>2</label>
    </ligand>
</feature>
<feature type="binding site" evidence="1">
    <location>
        <position position="225"/>
    </location>
    <ligand>
        <name>Mg(2+)</name>
        <dbReference type="ChEBI" id="CHEBI:18420"/>
        <label>1</label>
    </ligand>
</feature>
<feature type="binding site" evidence="1">
    <location>
        <position position="225"/>
    </location>
    <ligand>
        <name>Mg(2+)</name>
        <dbReference type="ChEBI" id="CHEBI:18420"/>
        <label>2</label>
    </ligand>
</feature>
<feature type="non-terminal residue">
    <location>
        <position position="242"/>
    </location>
</feature>
<organism>
    <name type="scientific">Bacillus caldotenax</name>
    <dbReference type="NCBI Taxonomy" id="1395"/>
    <lineage>
        <taxon>Bacteria</taxon>
        <taxon>Bacillati</taxon>
        <taxon>Bacillota</taxon>
        <taxon>Bacilli</taxon>
        <taxon>Bacillales</taxon>
        <taxon>Anoxybacillaceae</taxon>
        <taxon>Geobacillus</taxon>
        <taxon>Geobacillus thermoleovorans group</taxon>
    </lineage>
</organism>
<dbReference type="EC" id="2.4.2.18"/>
<dbReference type="EMBL" id="X55703">
    <property type="protein sequence ID" value="CAA39231.1"/>
    <property type="molecule type" value="Genomic_DNA"/>
</dbReference>
<dbReference type="PIR" id="S19267">
    <property type="entry name" value="S19267"/>
</dbReference>
<dbReference type="SMR" id="P30525"/>
<dbReference type="UniPathway" id="UPA00035">
    <property type="reaction ID" value="UER00041"/>
</dbReference>
<dbReference type="GO" id="GO:0005829">
    <property type="term" value="C:cytosol"/>
    <property type="evidence" value="ECO:0007669"/>
    <property type="project" value="TreeGrafter"/>
</dbReference>
<dbReference type="GO" id="GO:0004048">
    <property type="term" value="F:anthranilate phosphoribosyltransferase activity"/>
    <property type="evidence" value="ECO:0007669"/>
    <property type="project" value="UniProtKB-EC"/>
</dbReference>
<dbReference type="GO" id="GO:0046872">
    <property type="term" value="F:metal ion binding"/>
    <property type="evidence" value="ECO:0007669"/>
    <property type="project" value="UniProtKB-KW"/>
</dbReference>
<dbReference type="GO" id="GO:0000162">
    <property type="term" value="P:L-tryptophan biosynthetic process"/>
    <property type="evidence" value="ECO:0007669"/>
    <property type="project" value="UniProtKB-UniPathway"/>
</dbReference>
<dbReference type="Gene3D" id="3.40.1030.10">
    <property type="entry name" value="Nucleoside phosphorylase/phosphoribosyltransferase catalytic domain"/>
    <property type="match status" value="1"/>
</dbReference>
<dbReference type="Gene3D" id="1.20.970.10">
    <property type="entry name" value="Transferase, Pyrimidine Nucleoside Phosphorylase, Chain C"/>
    <property type="match status" value="1"/>
</dbReference>
<dbReference type="InterPro" id="IPR005940">
    <property type="entry name" value="Anthranilate_Pribosyl_Tfrase"/>
</dbReference>
<dbReference type="InterPro" id="IPR000312">
    <property type="entry name" value="Glycosyl_Trfase_fam3"/>
</dbReference>
<dbReference type="InterPro" id="IPR017459">
    <property type="entry name" value="Glycosyl_Trfase_fam3_N_dom"/>
</dbReference>
<dbReference type="InterPro" id="IPR036320">
    <property type="entry name" value="Glycosyl_Trfase_fam3_N_dom_sf"/>
</dbReference>
<dbReference type="InterPro" id="IPR035902">
    <property type="entry name" value="Nuc_phospho_transferase"/>
</dbReference>
<dbReference type="NCBIfam" id="TIGR01245">
    <property type="entry name" value="trpD"/>
    <property type="match status" value="1"/>
</dbReference>
<dbReference type="PANTHER" id="PTHR43285">
    <property type="entry name" value="ANTHRANILATE PHOSPHORIBOSYLTRANSFERASE"/>
    <property type="match status" value="1"/>
</dbReference>
<dbReference type="PANTHER" id="PTHR43285:SF2">
    <property type="entry name" value="ANTHRANILATE PHOSPHORIBOSYLTRANSFERASE"/>
    <property type="match status" value="1"/>
</dbReference>
<dbReference type="Pfam" id="PF02885">
    <property type="entry name" value="Glycos_trans_3N"/>
    <property type="match status" value="1"/>
</dbReference>
<dbReference type="Pfam" id="PF00591">
    <property type="entry name" value="Glycos_transf_3"/>
    <property type="match status" value="1"/>
</dbReference>
<dbReference type="SUPFAM" id="SSF52418">
    <property type="entry name" value="Nucleoside phosphorylase/phosphoribosyltransferase catalytic domain"/>
    <property type="match status" value="1"/>
</dbReference>
<dbReference type="SUPFAM" id="SSF47648">
    <property type="entry name" value="Nucleoside phosphorylase/phosphoribosyltransferase N-terminal domain"/>
    <property type="match status" value="1"/>
</dbReference>
<reference key="1">
    <citation type="journal article" date="1991" name="Biochim. Biophys. Acta">
        <title>Nucleotide sequence of trpE, anthranilate synthase I gene, of Bacillus caldotenax.</title>
        <authorList>
            <person name="Shiratsuchi A."/>
            <person name="Sato S."/>
        </authorList>
    </citation>
    <scope>NUCLEOTIDE SEQUENCE [GENOMIC DNA]</scope>
</reference>
<accession>P30525</accession>
<proteinExistence type="inferred from homology"/>